<sequence>MKDKQFAIPKATAKRLSLYYRIFKRFHAEKIERANSKQIAEAIGIDSATVRRDFSYFGELGRRGFGYDVKKLMTFFADLLNDNSITNVMLVGIGNMGHALLHYRFHERNKMKIIMAFDLDDHPEVGTQTPDGIPIYGISQIKDKIKDADVKTAILTVPSVKSQEVANLLVDAGVKGILSFSPVHLHLPKDVVVQYVDLTSELQTLLYFMRKED</sequence>
<name>REX_STRPI</name>
<evidence type="ECO:0000250" key="1">
    <source>
        <dbReference type="UniProtKB" id="Q04KJ6"/>
    </source>
</evidence>
<evidence type="ECO:0000255" key="2">
    <source>
        <dbReference type="HAMAP-Rule" id="MF_01131"/>
    </source>
</evidence>
<dbReference type="EMBL" id="CP000936">
    <property type="protein sequence ID" value="ACA37053.1"/>
    <property type="molecule type" value="Genomic_DNA"/>
</dbReference>
<dbReference type="RefSeq" id="WP_000653403.1">
    <property type="nucleotide sequence ID" value="NC_010380.1"/>
</dbReference>
<dbReference type="SMR" id="B1IBN0"/>
<dbReference type="KEGG" id="spv:SPH_1182"/>
<dbReference type="HOGENOM" id="CLU_061534_1_1_9"/>
<dbReference type="Proteomes" id="UP000002163">
    <property type="component" value="Chromosome"/>
</dbReference>
<dbReference type="GO" id="GO:0005737">
    <property type="term" value="C:cytoplasm"/>
    <property type="evidence" value="ECO:0007669"/>
    <property type="project" value="UniProtKB-SubCell"/>
</dbReference>
<dbReference type="GO" id="GO:0003677">
    <property type="term" value="F:DNA binding"/>
    <property type="evidence" value="ECO:0007669"/>
    <property type="project" value="UniProtKB-UniRule"/>
</dbReference>
<dbReference type="GO" id="GO:0003700">
    <property type="term" value="F:DNA-binding transcription factor activity"/>
    <property type="evidence" value="ECO:0007669"/>
    <property type="project" value="UniProtKB-UniRule"/>
</dbReference>
<dbReference type="GO" id="GO:0045892">
    <property type="term" value="P:negative regulation of DNA-templated transcription"/>
    <property type="evidence" value="ECO:0007669"/>
    <property type="project" value="InterPro"/>
</dbReference>
<dbReference type="GO" id="GO:0051775">
    <property type="term" value="P:response to redox state"/>
    <property type="evidence" value="ECO:0007669"/>
    <property type="project" value="InterPro"/>
</dbReference>
<dbReference type="Gene3D" id="3.40.50.720">
    <property type="entry name" value="NAD(P)-binding Rossmann-like Domain"/>
    <property type="match status" value="1"/>
</dbReference>
<dbReference type="Gene3D" id="1.10.10.10">
    <property type="entry name" value="Winged helix-like DNA-binding domain superfamily/Winged helix DNA-binding domain"/>
    <property type="match status" value="1"/>
</dbReference>
<dbReference type="HAMAP" id="MF_01131">
    <property type="entry name" value="Rex"/>
    <property type="match status" value="1"/>
</dbReference>
<dbReference type="InterPro" id="IPR003781">
    <property type="entry name" value="CoA-bd"/>
</dbReference>
<dbReference type="InterPro" id="IPR036291">
    <property type="entry name" value="NAD(P)-bd_dom_sf"/>
</dbReference>
<dbReference type="InterPro" id="IPR009718">
    <property type="entry name" value="Rex_DNA-bd_C_dom"/>
</dbReference>
<dbReference type="InterPro" id="IPR022876">
    <property type="entry name" value="Tscrpt_rep_Rex"/>
</dbReference>
<dbReference type="InterPro" id="IPR036388">
    <property type="entry name" value="WH-like_DNA-bd_sf"/>
</dbReference>
<dbReference type="InterPro" id="IPR036390">
    <property type="entry name" value="WH_DNA-bd_sf"/>
</dbReference>
<dbReference type="NCBIfam" id="NF003988">
    <property type="entry name" value="PRK05472.1-1"/>
    <property type="match status" value="1"/>
</dbReference>
<dbReference type="NCBIfam" id="NF003989">
    <property type="entry name" value="PRK05472.1-3"/>
    <property type="match status" value="1"/>
</dbReference>
<dbReference type="NCBIfam" id="NF003991">
    <property type="entry name" value="PRK05472.1-5"/>
    <property type="match status" value="1"/>
</dbReference>
<dbReference type="NCBIfam" id="NF003994">
    <property type="entry name" value="PRK05472.2-3"/>
    <property type="match status" value="1"/>
</dbReference>
<dbReference type="NCBIfam" id="NF003995">
    <property type="entry name" value="PRK05472.2-4"/>
    <property type="match status" value="1"/>
</dbReference>
<dbReference type="NCBIfam" id="NF003996">
    <property type="entry name" value="PRK05472.2-5"/>
    <property type="match status" value="1"/>
</dbReference>
<dbReference type="PANTHER" id="PTHR35786">
    <property type="entry name" value="REDOX-SENSING TRANSCRIPTIONAL REPRESSOR REX"/>
    <property type="match status" value="1"/>
</dbReference>
<dbReference type="PANTHER" id="PTHR35786:SF1">
    <property type="entry name" value="REDOX-SENSING TRANSCRIPTIONAL REPRESSOR REX 1"/>
    <property type="match status" value="1"/>
</dbReference>
<dbReference type="Pfam" id="PF02629">
    <property type="entry name" value="CoA_binding"/>
    <property type="match status" value="1"/>
</dbReference>
<dbReference type="Pfam" id="PF06971">
    <property type="entry name" value="Put_DNA-bind_N"/>
    <property type="match status" value="1"/>
</dbReference>
<dbReference type="SMART" id="SM00881">
    <property type="entry name" value="CoA_binding"/>
    <property type="match status" value="1"/>
</dbReference>
<dbReference type="SUPFAM" id="SSF51735">
    <property type="entry name" value="NAD(P)-binding Rossmann-fold domains"/>
    <property type="match status" value="1"/>
</dbReference>
<dbReference type="SUPFAM" id="SSF46785">
    <property type="entry name" value="Winged helix' DNA-binding domain"/>
    <property type="match status" value="1"/>
</dbReference>
<comment type="function">
    <text evidence="1 2">Modulates transcription in response to changes in cellular NADH/NAD(+) redox state (By similarity). Binds to the promoter of the aldehyde-alcohol dehydrogenase adhE gene. Functions as a redox-dependent repressor of adhE expression (By similarity).</text>
</comment>
<comment type="subunit">
    <text evidence="2">Homodimer.</text>
</comment>
<comment type="subcellular location">
    <subcellularLocation>
        <location evidence="2">Cytoplasm</location>
    </subcellularLocation>
</comment>
<comment type="similarity">
    <text evidence="2">Belongs to the transcriptional regulatory Rex family.</text>
</comment>
<proteinExistence type="inferred from homology"/>
<feature type="chain" id="PRO_1000137334" description="Redox-sensing transcriptional repressor Rex">
    <location>
        <begin position="1"/>
        <end position="213"/>
    </location>
</feature>
<feature type="DNA-binding region" description="H-T-H motif" evidence="2">
    <location>
        <begin position="18"/>
        <end position="57"/>
    </location>
</feature>
<feature type="binding site" evidence="2">
    <location>
        <begin position="92"/>
        <end position="97"/>
    </location>
    <ligand>
        <name>NAD(+)</name>
        <dbReference type="ChEBI" id="CHEBI:57540"/>
    </ligand>
</feature>
<protein>
    <recommendedName>
        <fullName evidence="2">Redox-sensing transcriptional repressor Rex</fullName>
    </recommendedName>
</protein>
<reference key="1">
    <citation type="journal article" date="2010" name="Genome Biol.">
        <title>Structure and dynamics of the pan-genome of Streptococcus pneumoniae and closely related species.</title>
        <authorList>
            <person name="Donati C."/>
            <person name="Hiller N.L."/>
            <person name="Tettelin H."/>
            <person name="Muzzi A."/>
            <person name="Croucher N.J."/>
            <person name="Angiuoli S.V."/>
            <person name="Oggioni M."/>
            <person name="Dunning Hotopp J.C."/>
            <person name="Hu F.Z."/>
            <person name="Riley D.R."/>
            <person name="Covacci A."/>
            <person name="Mitchell T.J."/>
            <person name="Bentley S.D."/>
            <person name="Kilian M."/>
            <person name="Ehrlich G.D."/>
            <person name="Rappuoli R."/>
            <person name="Moxon E.R."/>
            <person name="Masignani V."/>
        </authorList>
    </citation>
    <scope>NUCLEOTIDE SEQUENCE [LARGE SCALE GENOMIC DNA]</scope>
    <source>
        <strain>Hungary19A-6</strain>
    </source>
</reference>
<gene>
    <name evidence="2" type="primary">rex</name>
    <name type="ordered locus">SPH_1182</name>
</gene>
<accession>B1IBN0</accession>
<keyword id="KW-0963">Cytoplasm</keyword>
<keyword id="KW-0238">DNA-binding</keyword>
<keyword id="KW-0520">NAD</keyword>
<keyword id="KW-0678">Repressor</keyword>
<keyword id="KW-0804">Transcription</keyword>
<keyword id="KW-0805">Transcription regulation</keyword>
<organism>
    <name type="scientific">Streptococcus pneumoniae (strain Hungary19A-6)</name>
    <dbReference type="NCBI Taxonomy" id="487214"/>
    <lineage>
        <taxon>Bacteria</taxon>
        <taxon>Bacillati</taxon>
        <taxon>Bacillota</taxon>
        <taxon>Bacilli</taxon>
        <taxon>Lactobacillales</taxon>
        <taxon>Streptococcaceae</taxon>
        <taxon>Streptococcus</taxon>
    </lineage>
</organism>